<proteinExistence type="inferred from homology"/>
<comment type="function">
    <text evidence="1">One of the primary rRNA binding proteins, it binds directly to 16S rRNA where it nucleates assembly of the head domain of the 30S subunit. Is located at the subunit interface close to the decoding center, probably blocks exit of the E-site tRNA.</text>
</comment>
<comment type="subunit">
    <text evidence="1">Part of the 30S ribosomal subunit. Contacts proteins S9 and S11.</text>
</comment>
<comment type="similarity">
    <text evidence="1">Belongs to the universal ribosomal protein uS7 family.</text>
</comment>
<evidence type="ECO:0000255" key="1">
    <source>
        <dbReference type="HAMAP-Rule" id="MF_00480"/>
    </source>
</evidence>
<evidence type="ECO:0000305" key="2"/>
<accession>A5ELN1</accession>
<sequence>MSRRHSAEKREVLPDPKFGNIIVTKFMNSVMYAGKKSVAESIVYGAFGIIESKTKQNPLTVFEQALDNVMPTIEVRSRRVGGATYQVPVEVRSTRRQALGIRWLISAARDRNEKTMTERLSAELLDASNNRGNAVKKREDVHRMAEANRAFSHYRW</sequence>
<keyword id="KW-1185">Reference proteome</keyword>
<keyword id="KW-0687">Ribonucleoprotein</keyword>
<keyword id="KW-0689">Ribosomal protein</keyword>
<keyword id="KW-0694">RNA-binding</keyword>
<keyword id="KW-0699">rRNA-binding</keyword>
<keyword id="KW-0820">tRNA-binding</keyword>
<dbReference type="EMBL" id="CP000494">
    <property type="protein sequence ID" value="ABQ37075.1"/>
    <property type="molecule type" value="Genomic_DNA"/>
</dbReference>
<dbReference type="RefSeq" id="WP_012045047.1">
    <property type="nucleotide sequence ID" value="NC_009485.1"/>
</dbReference>
<dbReference type="SMR" id="A5ELN1"/>
<dbReference type="STRING" id="288000.BBta_5074"/>
<dbReference type="KEGG" id="bbt:BBta_5074"/>
<dbReference type="eggNOG" id="COG0049">
    <property type="taxonomic scope" value="Bacteria"/>
</dbReference>
<dbReference type="HOGENOM" id="CLU_072226_1_1_5"/>
<dbReference type="OrthoDB" id="9807653at2"/>
<dbReference type="Proteomes" id="UP000000246">
    <property type="component" value="Chromosome"/>
</dbReference>
<dbReference type="GO" id="GO:0015935">
    <property type="term" value="C:small ribosomal subunit"/>
    <property type="evidence" value="ECO:0007669"/>
    <property type="project" value="InterPro"/>
</dbReference>
<dbReference type="GO" id="GO:0019843">
    <property type="term" value="F:rRNA binding"/>
    <property type="evidence" value="ECO:0007669"/>
    <property type="project" value="UniProtKB-UniRule"/>
</dbReference>
<dbReference type="GO" id="GO:0003735">
    <property type="term" value="F:structural constituent of ribosome"/>
    <property type="evidence" value="ECO:0007669"/>
    <property type="project" value="InterPro"/>
</dbReference>
<dbReference type="GO" id="GO:0000049">
    <property type="term" value="F:tRNA binding"/>
    <property type="evidence" value="ECO:0007669"/>
    <property type="project" value="UniProtKB-UniRule"/>
</dbReference>
<dbReference type="GO" id="GO:0006412">
    <property type="term" value="P:translation"/>
    <property type="evidence" value="ECO:0007669"/>
    <property type="project" value="UniProtKB-UniRule"/>
</dbReference>
<dbReference type="CDD" id="cd14869">
    <property type="entry name" value="uS7_Bacteria"/>
    <property type="match status" value="1"/>
</dbReference>
<dbReference type="FunFam" id="1.10.455.10:FF:000001">
    <property type="entry name" value="30S ribosomal protein S7"/>
    <property type="match status" value="1"/>
</dbReference>
<dbReference type="Gene3D" id="1.10.455.10">
    <property type="entry name" value="Ribosomal protein S7 domain"/>
    <property type="match status" value="1"/>
</dbReference>
<dbReference type="HAMAP" id="MF_00480_B">
    <property type="entry name" value="Ribosomal_uS7_B"/>
    <property type="match status" value="1"/>
</dbReference>
<dbReference type="InterPro" id="IPR000235">
    <property type="entry name" value="Ribosomal_uS7"/>
</dbReference>
<dbReference type="InterPro" id="IPR005717">
    <property type="entry name" value="Ribosomal_uS7_bac/org-type"/>
</dbReference>
<dbReference type="InterPro" id="IPR020606">
    <property type="entry name" value="Ribosomal_uS7_CS"/>
</dbReference>
<dbReference type="InterPro" id="IPR023798">
    <property type="entry name" value="Ribosomal_uS7_dom"/>
</dbReference>
<dbReference type="InterPro" id="IPR036823">
    <property type="entry name" value="Ribosomal_uS7_dom_sf"/>
</dbReference>
<dbReference type="NCBIfam" id="TIGR01029">
    <property type="entry name" value="rpsG_bact"/>
    <property type="match status" value="1"/>
</dbReference>
<dbReference type="PANTHER" id="PTHR11205">
    <property type="entry name" value="RIBOSOMAL PROTEIN S7"/>
    <property type="match status" value="1"/>
</dbReference>
<dbReference type="Pfam" id="PF00177">
    <property type="entry name" value="Ribosomal_S7"/>
    <property type="match status" value="1"/>
</dbReference>
<dbReference type="PIRSF" id="PIRSF002122">
    <property type="entry name" value="RPS7p_RPS7a_RPS5e_RPS7o"/>
    <property type="match status" value="1"/>
</dbReference>
<dbReference type="SUPFAM" id="SSF47973">
    <property type="entry name" value="Ribosomal protein S7"/>
    <property type="match status" value="1"/>
</dbReference>
<dbReference type="PROSITE" id="PS00052">
    <property type="entry name" value="RIBOSOMAL_S7"/>
    <property type="match status" value="1"/>
</dbReference>
<feature type="chain" id="PRO_1000014151" description="Small ribosomal subunit protein uS7">
    <location>
        <begin position="1"/>
        <end position="156"/>
    </location>
</feature>
<reference key="1">
    <citation type="journal article" date="2007" name="Science">
        <title>Legumes symbioses: absence of nod genes in photosynthetic bradyrhizobia.</title>
        <authorList>
            <person name="Giraud E."/>
            <person name="Moulin L."/>
            <person name="Vallenet D."/>
            <person name="Barbe V."/>
            <person name="Cytryn E."/>
            <person name="Avarre J.-C."/>
            <person name="Jaubert M."/>
            <person name="Simon D."/>
            <person name="Cartieaux F."/>
            <person name="Prin Y."/>
            <person name="Bena G."/>
            <person name="Hannibal L."/>
            <person name="Fardoux J."/>
            <person name="Kojadinovic M."/>
            <person name="Vuillet L."/>
            <person name="Lajus A."/>
            <person name="Cruveiller S."/>
            <person name="Rouy Z."/>
            <person name="Mangenot S."/>
            <person name="Segurens B."/>
            <person name="Dossat C."/>
            <person name="Franck W.L."/>
            <person name="Chang W.-S."/>
            <person name="Saunders E."/>
            <person name="Bruce D."/>
            <person name="Richardson P."/>
            <person name="Normand P."/>
            <person name="Dreyfus B."/>
            <person name="Pignol D."/>
            <person name="Stacey G."/>
            <person name="Emerich D."/>
            <person name="Vermeglio A."/>
            <person name="Medigue C."/>
            <person name="Sadowsky M."/>
        </authorList>
    </citation>
    <scope>NUCLEOTIDE SEQUENCE [LARGE SCALE GENOMIC DNA]</scope>
    <source>
        <strain>BTAi1 / ATCC BAA-1182</strain>
    </source>
</reference>
<name>RS7_BRASB</name>
<gene>
    <name evidence="1" type="primary">rpsG</name>
    <name type="ordered locus">BBta_5074</name>
</gene>
<protein>
    <recommendedName>
        <fullName evidence="1">Small ribosomal subunit protein uS7</fullName>
    </recommendedName>
    <alternativeName>
        <fullName evidence="2">30S ribosomal protein S7</fullName>
    </alternativeName>
</protein>
<organism>
    <name type="scientific">Bradyrhizobium sp. (strain BTAi1 / ATCC BAA-1182)</name>
    <dbReference type="NCBI Taxonomy" id="288000"/>
    <lineage>
        <taxon>Bacteria</taxon>
        <taxon>Pseudomonadati</taxon>
        <taxon>Pseudomonadota</taxon>
        <taxon>Alphaproteobacteria</taxon>
        <taxon>Hyphomicrobiales</taxon>
        <taxon>Nitrobacteraceae</taxon>
        <taxon>Bradyrhizobium</taxon>
    </lineage>
</organism>